<keyword id="KW-1003">Cell membrane</keyword>
<keyword id="KW-0134">Cell wall</keyword>
<keyword id="KW-0961">Cell wall biogenesis/degradation</keyword>
<keyword id="KW-0325">Glycoprotein</keyword>
<keyword id="KW-0336">GPI-anchor</keyword>
<keyword id="KW-0449">Lipoprotein</keyword>
<keyword id="KW-0472">Membrane</keyword>
<keyword id="KW-1185">Reference proteome</keyword>
<keyword id="KW-0677">Repeat</keyword>
<keyword id="KW-0964">Secreted</keyword>
<keyword id="KW-0732">Signal</keyword>
<reference key="1">
    <citation type="journal article" date="1990" name="J. Cell Biol.">
        <title>Yeast KRE genes provide evidence for a pathway of cell wall beta-glucan assembly.</title>
        <authorList>
            <person name="Boone C."/>
            <person name="Sommer S.S."/>
            <person name="Hensel A."/>
            <person name="Bussey H."/>
        </authorList>
    </citation>
    <scope>NUCLEOTIDE SEQUENCE [GENOMIC DNA]</scope>
    <source>
        <strain>S288c / GRF88</strain>
    </source>
</reference>
<reference key="2">
    <citation type="journal article" date="1995" name="Yeast">
        <title>Sequencing analysis of a 15.4 kb fragment of yeast chromosome XIV identifies the RPD3, PAS8 and KRE1 loci, five new open reading frames.</title>
        <authorList>
            <person name="Maftahi M."/>
            <person name="Nicaud J.-M."/>
            <person name="Levesque H."/>
            <person name="Gaillardin C."/>
        </authorList>
    </citation>
    <scope>NUCLEOTIDE SEQUENCE [GENOMIC DNA]</scope>
    <source>
        <strain>S288c / FY1676</strain>
    </source>
</reference>
<reference key="3">
    <citation type="journal article" date="1995" name="Yeast">
        <title>Sequencing analysis of a 24.7 kb fragment of yeast chromosome XIV identifies six known genes, a new member of the hexose transporter family and ten new open reading frames.</title>
        <authorList>
            <person name="Maftahi M."/>
            <person name="Nicaud J.-M."/>
            <person name="Levesque H."/>
            <person name="Gaillardin C."/>
        </authorList>
    </citation>
    <scope>NUCLEOTIDE SEQUENCE [GENOMIC DNA]</scope>
    <source>
        <strain>S288c / FY1676</strain>
    </source>
</reference>
<reference key="4">
    <citation type="journal article" date="1997" name="Nature">
        <title>The nucleotide sequence of Saccharomyces cerevisiae chromosome XIV and its evolutionary implications.</title>
        <authorList>
            <person name="Philippsen P."/>
            <person name="Kleine K."/>
            <person name="Poehlmann R."/>
            <person name="Duesterhoeft A."/>
            <person name="Hamberg K."/>
            <person name="Hegemann J.H."/>
            <person name="Obermaier B."/>
            <person name="Urrestarazu L.A."/>
            <person name="Aert R."/>
            <person name="Albermann K."/>
            <person name="Altmann R."/>
            <person name="Andre B."/>
            <person name="Baladron V."/>
            <person name="Ballesta J.P.G."/>
            <person name="Becam A.-M."/>
            <person name="Beinhauer J.D."/>
            <person name="Boskovic J."/>
            <person name="Buitrago M.J."/>
            <person name="Bussereau F."/>
            <person name="Coster F."/>
            <person name="Crouzet M."/>
            <person name="D'Angelo M."/>
            <person name="Dal Pero F."/>
            <person name="De Antoni A."/>
            <person name="del Rey F."/>
            <person name="Doignon F."/>
            <person name="Domdey H."/>
            <person name="Dubois E."/>
            <person name="Fiedler T.A."/>
            <person name="Fleig U."/>
            <person name="Floeth M."/>
            <person name="Fritz C."/>
            <person name="Gaillardin C."/>
            <person name="Garcia-Cantalejo J.M."/>
            <person name="Glansdorff N."/>
            <person name="Goffeau A."/>
            <person name="Gueldener U."/>
            <person name="Herbert C.J."/>
            <person name="Heumann K."/>
            <person name="Heuss-Neitzel D."/>
            <person name="Hilbert H."/>
            <person name="Hinni K."/>
            <person name="Iraqui Houssaini I."/>
            <person name="Jacquet M."/>
            <person name="Jimenez A."/>
            <person name="Jonniaux J.-L."/>
            <person name="Karpfinger-Hartl L."/>
            <person name="Lanfranchi G."/>
            <person name="Lepingle A."/>
            <person name="Levesque H."/>
            <person name="Lyck R."/>
            <person name="Maftahi M."/>
            <person name="Mallet L."/>
            <person name="Maurer C.T.C."/>
            <person name="Messenguy F."/>
            <person name="Mewes H.-W."/>
            <person name="Moestl D."/>
            <person name="Nasr F."/>
            <person name="Nicaud J.-M."/>
            <person name="Niedenthal R.K."/>
            <person name="Pandolfo D."/>
            <person name="Pierard A."/>
            <person name="Piravandi E."/>
            <person name="Planta R.J."/>
            <person name="Pohl T.M."/>
            <person name="Purnelle B."/>
            <person name="Rebischung C."/>
            <person name="Remacha M.A."/>
            <person name="Revuelta J.L."/>
            <person name="Rinke M."/>
            <person name="Saiz J.E."/>
            <person name="Sartorello F."/>
            <person name="Scherens B."/>
            <person name="Sen-Gupta M."/>
            <person name="Soler-Mira A."/>
            <person name="Urbanus J.H.M."/>
            <person name="Valle G."/>
            <person name="Van Dyck L."/>
            <person name="Verhasselt P."/>
            <person name="Vierendeels F."/>
            <person name="Vissers S."/>
            <person name="Voet M."/>
            <person name="Volckaert G."/>
            <person name="Wach A."/>
            <person name="Wambutt R."/>
            <person name="Wedler H."/>
            <person name="Zollner A."/>
            <person name="Hani J."/>
        </authorList>
    </citation>
    <scope>NUCLEOTIDE SEQUENCE [LARGE SCALE GENOMIC DNA]</scope>
    <source>
        <strain>ATCC 204508 / S288c</strain>
    </source>
</reference>
<reference key="5">
    <citation type="journal article" date="2014" name="G3 (Bethesda)">
        <title>The reference genome sequence of Saccharomyces cerevisiae: Then and now.</title>
        <authorList>
            <person name="Engel S.R."/>
            <person name="Dietrich F.S."/>
            <person name="Fisk D.G."/>
            <person name="Binkley G."/>
            <person name="Balakrishnan R."/>
            <person name="Costanzo M.C."/>
            <person name="Dwight S.S."/>
            <person name="Hitz B.C."/>
            <person name="Karra K."/>
            <person name="Nash R.S."/>
            <person name="Weng S."/>
            <person name="Wong E.D."/>
            <person name="Lloyd P."/>
            <person name="Skrzypek M.S."/>
            <person name="Miyasato S.R."/>
            <person name="Simison M."/>
            <person name="Cherry J.M."/>
        </authorList>
    </citation>
    <scope>GENOME REANNOTATION</scope>
    <source>
        <strain>ATCC 204508 / S288c</strain>
    </source>
</reference>
<reference key="6">
    <citation type="journal article" date="1995" name="Mol. Gen. Genet.">
        <title>Yeast Kre1p is a cell surface O-glycoprotein.</title>
        <authorList>
            <person name="Roemer T."/>
            <person name="Bussey H."/>
        </authorList>
    </citation>
    <scope>SUBCELLULAR LOCATION</scope>
</reference>
<reference key="7">
    <citation type="journal article" date="2002" name="Cell">
        <title>Kre1p, the plasma membrane receptor for the yeast K1 viral toxin.</title>
        <authorList>
            <person name="Breinig F."/>
            <person name="Tipper D.J."/>
            <person name="Schmitt M.J."/>
        </authorList>
    </citation>
    <scope>FUNCTION</scope>
    <scope>SUBCELLULAR LOCATION</scope>
</reference>
<reference key="8">
    <citation type="journal article" date="2003" name="Nature">
        <title>Global analysis of protein expression in yeast.</title>
        <authorList>
            <person name="Ghaemmaghami S."/>
            <person name="Huh W.-K."/>
            <person name="Bower K."/>
            <person name="Howson R.W."/>
            <person name="Belle A."/>
            <person name="Dephoure N."/>
            <person name="O'Shea E.K."/>
            <person name="Weissman J.S."/>
        </authorList>
    </citation>
    <scope>LEVEL OF PROTEIN EXPRESSION [LARGE SCALE ANALYSIS]</scope>
</reference>
<reference key="9">
    <citation type="journal article" date="2004" name="Microbiology">
        <title>Yeast Kre1p is GPI-anchored and involved in both cell wall assembly and architecture.</title>
        <authorList>
            <person name="Breinig F."/>
            <person name="Schleinkofer K."/>
            <person name="Schmitt M.J."/>
        </authorList>
    </citation>
    <scope>FUNCTION</scope>
    <scope>SUBCELLULAR LOCATION</scope>
</reference>
<evidence type="ECO:0000250" key="1"/>
<evidence type="ECO:0000255" key="2"/>
<evidence type="ECO:0000256" key="3">
    <source>
        <dbReference type="SAM" id="MobiDB-lite"/>
    </source>
</evidence>
<evidence type="ECO:0000269" key="4">
    <source>
    </source>
</evidence>
<evidence type="ECO:0000269" key="5">
    <source>
    </source>
</evidence>
<evidence type="ECO:0000269" key="6">
    <source>
    </source>
</evidence>
<evidence type="ECO:0000305" key="7"/>
<dbReference type="EMBL" id="X51729">
    <property type="protein sequence ID" value="CAA36017.1"/>
    <property type="molecule type" value="Genomic_DNA"/>
</dbReference>
<dbReference type="EMBL" id="Z46259">
    <property type="protein sequence ID" value="CAA86375.1"/>
    <property type="molecule type" value="Genomic_DNA"/>
</dbReference>
<dbReference type="EMBL" id="Z71598">
    <property type="protein sequence ID" value="CAA96253.1"/>
    <property type="molecule type" value="Genomic_DNA"/>
</dbReference>
<dbReference type="EMBL" id="BK006947">
    <property type="protein sequence ID" value="DAA10240.1"/>
    <property type="molecule type" value="Genomic_DNA"/>
</dbReference>
<dbReference type="PIR" id="A34677">
    <property type="entry name" value="A34677"/>
</dbReference>
<dbReference type="RefSeq" id="NP_014077.1">
    <property type="nucleotide sequence ID" value="NM_001183160.1"/>
</dbReference>
<dbReference type="BioGRID" id="35518">
    <property type="interactions" value="295"/>
</dbReference>
<dbReference type="FunCoup" id="P17260">
    <property type="interactions" value="72"/>
</dbReference>
<dbReference type="IntAct" id="P17260">
    <property type="interactions" value="10"/>
</dbReference>
<dbReference type="MINT" id="P17260"/>
<dbReference type="STRING" id="4932.YNL322C"/>
<dbReference type="GlyGen" id="P17260">
    <property type="glycosylation" value="1 site"/>
</dbReference>
<dbReference type="iPTMnet" id="P17260"/>
<dbReference type="PaxDb" id="4932-YNL322C"/>
<dbReference type="PeptideAtlas" id="P17260"/>
<dbReference type="EnsemblFungi" id="YNL322C_mRNA">
    <property type="protein sequence ID" value="YNL322C"/>
    <property type="gene ID" value="YNL322C"/>
</dbReference>
<dbReference type="GeneID" id="855394"/>
<dbReference type="KEGG" id="sce:YNL322C"/>
<dbReference type="AGR" id="SGD:S000005266"/>
<dbReference type="SGD" id="S000005266">
    <property type="gene designation" value="KRE1"/>
</dbReference>
<dbReference type="VEuPathDB" id="FungiDB:YNL322C"/>
<dbReference type="eggNOG" id="ENOG502S1TV">
    <property type="taxonomic scope" value="Eukaryota"/>
</dbReference>
<dbReference type="HOGENOM" id="CLU_083995_0_0_1"/>
<dbReference type="InParanoid" id="P17260"/>
<dbReference type="OMA" id="RAPTSMW"/>
<dbReference type="OrthoDB" id="5406216at2759"/>
<dbReference type="BioCyc" id="YEAST:G3O-33307-MONOMER"/>
<dbReference type="BioGRID-ORCS" id="855394">
    <property type="hits" value="9 hits in 10 CRISPR screens"/>
</dbReference>
<dbReference type="PRO" id="PR:P17260"/>
<dbReference type="Proteomes" id="UP000002311">
    <property type="component" value="Chromosome XIV"/>
</dbReference>
<dbReference type="RNAct" id="P17260">
    <property type="molecule type" value="protein"/>
</dbReference>
<dbReference type="GO" id="GO:0005576">
    <property type="term" value="C:extracellular region"/>
    <property type="evidence" value="ECO:0007669"/>
    <property type="project" value="UniProtKB-KW"/>
</dbReference>
<dbReference type="GO" id="GO:0009277">
    <property type="term" value="C:fungal-type cell wall"/>
    <property type="evidence" value="ECO:0000314"/>
    <property type="project" value="SGD"/>
</dbReference>
<dbReference type="GO" id="GO:0000324">
    <property type="term" value="C:fungal-type vacuole"/>
    <property type="evidence" value="ECO:0007005"/>
    <property type="project" value="SGD"/>
</dbReference>
<dbReference type="GO" id="GO:0005886">
    <property type="term" value="C:plasma membrane"/>
    <property type="evidence" value="ECO:0007669"/>
    <property type="project" value="UniProtKB-SubCell"/>
</dbReference>
<dbReference type="GO" id="GO:0098552">
    <property type="term" value="C:side of membrane"/>
    <property type="evidence" value="ECO:0007669"/>
    <property type="project" value="UniProtKB-KW"/>
</dbReference>
<dbReference type="GO" id="GO:0005199">
    <property type="term" value="F:structural constituent of cell wall"/>
    <property type="evidence" value="ECO:0000304"/>
    <property type="project" value="SGD"/>
</dbReference>
<dbReference type="GO" id="GO:0031505">
    <property type="term" value="P:fungal-type cell wall organization"/>
    <property type="evidence" value="ECO:0000304"/>
    <property type="project" value="SGD"/>
</dbReference>
<dbReference type="InterPro" id="IPR031452">
    <property type="entry name" value="Kre1"/>
</dbReference>
<dbReference type="Pfam" id="PF17056">
    <property type="entry name" value="KRE1"/>
    <property type="match status" value="1"/>
</dbReference>
<comment type="function">
    <text evidence="4 6">Involved in a late stage of cell wall 1,6-beta-glucan synthesis and assembly. Has a structural, rather than enzymic, function within cell wall 1,6-beta-glucan assembly and architecture, possibly by being involved in covalently cross-linking 1,6-beta-glucans to other cell wall components such as 1,3-beta-glucan, chitin and certain mannoproteins. Acts as the plasma membrane receptor for the yeast K1 viral toxin.</text>
</comment>
<comment type="subcellular location">
    <subcellularLocation>
        <location>Cell membrane</location>
        <topology>Lipid-anchor</topology>
        <topology>GPI-anchor</topology>
    </subcellularLocation>
    <subcellularLocation>
        <location>Secreted</location>
        <location>Cell wall</location>
    </subcellularLocation>
    <text>Identified as GPI-anchored plasma membrane protein (GPI-PMP) as well as component of the cell wall. Concentrated at the surface of mother cells.</text>
</comment>
<comment type="PTM">
    <text>Extensively modified; probably through addition of O-linked mannose residues.</text>
</comment>
<comment type="PTM">
    <text evidence="1">The GPI-anchor is attached to the protein in the endoplasmic reticulum and serves to target the protein to the cell surface. There, the glucosamine-inositol phospholipid moiety is cleaved off and the GPI-modified mannoprotein is covalently attached via its lipidless GPI glycan remnant to the 1,6-beta-glucan of the outer cell wall layer (By similarity).</text>
</comment>
<comment type="miscellaneous">
    <text evidence="5">Present with 623 molecules/cell in log phase SD medium.</text>
</comment>
<comment type="similarity">
    <text evidence="7">Belongs to the KRE1 family.</text>
</comment>
<gene>
    <name type="primary">KRE1</name>
    <name type="ordered locus">YNL322C</name>
    <name type="ORF">N0336</name>
</gene>
<feature type="signal peptide" evidence="2">
    <location>
        <begin position="1"/>
        <end position="26"/>
    </location>
</feature>
<feature type="chain" id="PRO_0000021561" description="Protein KRE1">
    <location>
        <begin position="27"/>
        <end position="288"/>
    </location>
</feature>
<feature type="propeptide" id="PRO_0000021562" description="Removed in mature form" evidence="2">
    <location>
        <begin position="289"/>
        <end position="313"/>
    </location>
</feature>
<feature type="repeat" description="1">
    <location>
        <begin position="72"/>
        <end position="86"/>
    </location>
</feature>
<feature type="repeat" description="2">
    <location>
        <begin position="127"/>
        <end position="141"/>
    </location>
</feature>
<feature type="region of interest" description="2 X approximate repeats">
    <location>
        <begin position="72"/>
        <end position="141"/>
    </location>
</feature>
<feature type="region of interest" description="Disordered" evidence="3">
    <location>
        <begin position="94"/>
        <end position="114"/>
    </location>
</feature>
<feature type="region of interest" description="Disordered" evidence="3">
    <location>
        <begin position="147"/>
        <end position="198"/>
    </location>
</feature>
<feature type="compositionally biased region" description="Low complexity" evidence="3">
    <location>
        <begin position="147"/>
        <end position="181"/>
    </location>
</feature>
<feature type="lipid moiety-binding region" description="GPI-anchor amidated asparagine" evidence="2">
    <location>
        <position position="288"/>
    </location>
</feature>
<proteinExistence type="evidence at protein level"/>
<name>KRE1_YEAST</name>
<accession>P17260</accession>
<accession>D6W0M4</accession>
<organism>
    <name type="scientific">Saccharomyces cerevisiae (strain ATCC 204508 / S288c)</name>
    <name type="common">Baker's yeast</name>
    <dbReference type="NCBI Taxonomy" id="559292"/>
    <lineage>
        <taxon>Eukaryota</taxon>
        <taxon>Fungi</taxon>
        <taxon>Dikarya</taxon>
        <taxon>Ascomycota</taxon>
        <taxon>Saccharomycotina</taxon>
        <taxon>Saccharomycetes</taxon>
        <taxon>Saccharomycetales</taxon>
        <taxon>Saccharomycetaceae</taxon>
        <taxon>Saccharomyces</taxon>
    </lineage>
</organism>
<sequence>MMRRTLLHSFATLLLSLSLWSAAVMAAVTTQVTVVTNVAGALVTETTIWDPATAAAAATTTAQTGFFTTVFTTTNDVGTTVTLTQTVNRATMLPTTTTSTSSTGKTTTTVPTATSSLSSGLYLSTVTTTNDLGTTVTLTQTFTHSSTSATSSASSSVSSSVSSSGSSSSVKTTTSTGSAVAETGTRPDPSTDFTEPPVSAVTSLSIDSYITITEGTTSTYTTTRAPTSMWVTVVRQGNTITVQTTFVQRFSSQYVTVASPSVGSIGMGTLTGTVGVIKSAIKKTVSHNEAQHLGMSSFTSILGGLLTVLIWFL</sequence>
<protein>
    <recommendedName>
        <fullName>Protein KRE1</fullName>
    </recommendedName>
    <alternativeName>
        <fullName>Killer toxin-resistance protein 1</fullName>
    </alternativeName>
</protein>